<name>TEG4_HHV2H</name>
<organism>
    <name type="scientific">Human herpesvirus 2 (strain HG52)</name>
    <name type="common">HHV-2</name>
    <name type="synonym">Human herpes simplex virus 2</name>
    <dbReference type="NCBI Taxonomy" id="10315"/>
    <lineage>
        <taxon>Viruses</taxon>
        <taxon>Duplodnaviria</taxon>
        <taxon>Heunggongvirae</taxon>
        <taxon>Peploviricota</taxon>
        <taxon>Herviviricetes</taxon>
        <taxon>Herpesvirales</taxon>
        <taxon>Orthoherpesviridae</taxon>
        <taxon>Alphaherpesvirinae</taxon>
        <taxon>Simplexvirus</taxon>
        <taxon>Simplexvirus humanalpha2</taxon>
        <taxon>Human herpesvirus 2</taxon>
    </lineage>
</organism>
<organismHost>
    <name type="scientific">Homo sapiens</name>
    <name type="common">Human</name>
    <dbReference type="NCBI Taxonomy" id="9606"/>
</organismHost>
<sequence>MELSYATTLHHRDVVFYVTADRNRAYFVCGGSVYSVGRPRDSQPGEIAKFGLVVRGTGPKDRMVANYVRSELRQRGLRDVRPVGEDEVFLDSVCLLNPNVSSERDVINTNDVEVLDECLAEYCTSLRTSPGVLVTGVRVRARDRVIELFEHPAIVNISSRFAYTPSPYVFALAQAHLPRLPSSLEPLVSGLFDGIPAPRQPLDARDRRTDVVITGTRAPRPMAGTGAGGAGAKRATVSEFVQVKHIDRVVSPSVSSAPPPSAPDASLPPPGLQEAAPPGPPLRELWWVFYAGDRALEEPHAESGLTREEVRAVHGFREQAWKLFGSVGAPRAFLGAALALSPTQKLAVYYYLIHRERRMSPFPALVRLVGRYIQRHGLYVPAPDEPTLADAMNGLFRDALAAGTVAEQLLMFDLLPPKDVPVGSDARADSAALLRFVDSQRLTPGGSVSPEHVMYLGAFLGVLYAGHGRLAAATHTARLTGVTSLVLTVGDVDRMSAFDRGPAGAAGRTRTAGYLDALLTVCLARAQHGQSV</sequence>
<reference key="1">
    <citation type="journal article" date="1998" name="J. Virol.">
        <title>The genome sequence of herpes simplex virus type 2.</title>
        <authorList>
            <person name="Dolan A."/>
            <person name="Jamieson F.E."/>
            <person name="Cunningham C."/>
            <person name="Barnett B.C."/>
            <person name="McGeoch D.J."/>
        </authorList>
    </citation>
    <scope>NUCLEOTIDE SEQUENCE [LARGE SCALE GENOMIC DNA]</scope>
</reference>
<gene>
    <name type="ORF">UL21</name>
</gene>
<accession>P89444</accession>
<protein>
    <recommendedName>
        <fullName>Tegument protein UL21</fullName>
    </recommendedName>
</protein>
<dbReference type="EMBL" id="Z86099">
    <property type="protein sequence ID" value="CAB06745.1"/>
    <property type="molecule type" value="Genomic_DNA"/>
</dbReference>
<dbReference type="RefSeq" id="YP_009137172.1">
    <property type="nucleotide sequence ID" value="NC_001798.2"/>
</dbReference>
<dbReference type="SMR" id="P89444"/>
<dbReference type="DNASU" id="1487305"/>
<dbReference type="GeneID" id="1487305"/>
<dbReference type="KEGG" id="vg:1487305"/>
<dbReference type="Proteomes" id="UP000001874">
    <property type="component" value="Segment"/>
</dbReference>
<dbReference type="GO" id="GO:0030430">
    <property type="term" value="C:host cell cytoplasm"/>
    <property type="evidence" value="ECO:0007669"/>
    <property type="project" value="UniProtKB-SubCell"/>
</dbReference>
<dbReference type="GO" id="GO:0042025">
    <property type="term" value="C:host cell nucleus"/>
    <property type="evidence" value="ECO:0007669"/>
    <property type="project" value="UniProtKB-SubCell"/>
</dbReference>
<dbReference type="GO" id="GO:0019033">
    <property type="term" value="C:viral tegument"/>
    <property type="evidence" value="ECO:0007669"/>
    <property type="project" value="UniProtKB-SubCell"/>
</dbReference>
<dbReference type="InterPro" id="IPR004936">
    <property type="entry name" value="Herpes_UL21"/>
</dbReference>
<dbReference type="Pfam" id="PF03252">
    <property type="entry name" value="Herpes_UL21"/>
    <property type="match status" value="1"/>
</dbReference>
<keyword id="KW-1035">Host cytoplasm</keyword>
<keyword id="KW-1048">Host nucleus</keyword>
<keyword id="KW-1185">Reference proteome</keyword>
<keyword id="KW-0946">Virion</keyword>
<keyword id="KW-0920">Virion tegument</keyword>
<proteinExistence type="inferred from homology"/>
<evidence type="ECO:0000250" key="1"/>
<evidence type="ECO:0000256" key="2">
    <source>
        <dbReference type="SAM" id="MobiDB-lite"/>
    </source>
</evidence>
<evidence type="ECO:0000305" key="3"/>
<comment type="function">
    <text evidence="1">May participate in DNA packaging/capsid maturation events. Promotes efficient incorporation of tegument proteins UL46, UL49, and US3 into virions. May also play a role in capsid transport to the trans-Golgi network (TGN) (By similarity).</text>
</comment>
<comment type="subunit">
    <text evidence="1">Interacts (via C-terminus) with UL16.</text>
</comment>
<comment type="subcellular location">
    <subcellularLocation>
        <location evidence="1">Virion tegument</location>
    </subcellularLocation>
    <subcellularLocation>
        <location evidence="1">Host cytoplasm</location>
    </subcellularLocation>
    <subcellularLocation>
        <location evidence="1">Host nucleus</location>
    </subcellularLocation>
</comment>
<comment type="similarity">
    <text evidence="3">Belongs to the alphaherpesvirinae UL21 protein family.</text>
</comment>
<feature type="chain" id="PRO_0000385153" description="Tegument protein UL21">
    <location>
        <begin position="1"/>
        <end position="532"/>
    </location>
</feature>
<feature type="region of interest" description="Disordered" evidence="2">
    <location>
        <begin position="251"/>
        <end position="276"/>
    </location>
</feature>
<feature type="compositionally biased region" description="Pro residues" evidence="2">
    <location>
        <begin position="257"/>
        <end position="276"/>
    </location>
</feature>